<protein>
    <recommendedName>
        <fullName evidence="10">Nuclear envelope integral membrane protein</fullName>
    </recommendedName>
</protein>
<keyword id="KW-0325">Glycoprotein</keyword>
<keyword id="KW-0472">Membrane</keyword>
<keyword id="KW-0539">Nucleus</keyword>
<keyword id="KW-1185">Reference proteome</keyword>
<keyword id="KW-0732">Signal</keyword>
<keyword id="KW-0812">Transmembrane</keyword>
<keyword id="KW-1133">Transmembrane helix</keyword>
<reference evidence="9" key="1">
    <citation type="journal article" date="1998" name="Science">
        <title>Genome sequence of the nematode C. elegans: a platform for investigating biology.</title>
        <authorList>
            <consortium name="The C. elegans sequencing consortium"/>
        </authorList>
    </citation>
    <scope>NUCLEOTIDE SEQUENCE [LARGE SCALE GENOMIC DNA]</scope>
    <source>
        <strain evidence="9">Bristol N2</strain>
    </source>
</reference>
<reference evidence="8" key="2">
    <citation type="journal article" date="2020" name="Sci. Adv.">
        <title>The NEMP family supports metazoan fertility and nuclear envelope stiffness.</title>
        <authorList>
            <person name="Tsatskis Y."/>
            <person name="Rosenfeld R."/>
            <person name="Pearson J.D."/>
            <person name="Boswell C."/>
            <person name="Qu Y."/>
            <person name="Kim K."/>
            <person name="Fabian L."/>
            <person name="Mohammad A."/>
            <person name="Wang X."/>
            <person name="Robson M.I."/>
            <person name="Krchma K."/>
            <person name="Wu J."/>
            <person name="Goncalves J."/>
            <person name="Hodzic D."/>
            <person name="Wu S."/>
            <person name="Potter D."/>
            <person name="Pelletier L."/>
            <person name="Dunham W.H."/>
            <person name="Gingras A.C."/>
            <person name="Sun Y."/>
            <person name="Meng J."/>
            <person name="Godt D."/>
            <person name="Schedl T."/>
            <person name="Ciruna B."/>
            <person name="Choi K."/>
            <person name="Perry J.R.B."/>
            <person name="Bremner R."/>
            <person name="Schirmer E.C."/>
            <person name="Brill J.A."/>
            <person name="Jurisicova A."/>
            <person name="McNeill H."/>
        </authorList>
    </citation>
    <scope>FUNCTION</scope>
</reference>
<evidence type="ECO:0000250" key="1">
    <source>
        <dbReference type="UniProtKB" id="B9X187"/>
    </source>
</evidence>
<evidence type="ECO:0000250" key="2">
    <source>
        <dbReference type="UniProtKB" id="O14524"/>
    </source>
</evidence>
<evidence type="ECO:0000250" key="3">
    <source>
        <dbReference type="UniProtKB" id="Q6ZQE4"/>
    </source>
</evidence>
<evidence type="ECO:0000255" key="4"/>
<evidence type="ECO:0000255" key="5">
    <source>
        <dbReference type="PROSITE-ProRule" id="PRU00498"/>
    </source>
</evidence>
<evidence type="ECO:0000256" key="6">
    <source>
        <dbReference type="SAM" id="MobiDB-lite"/>
    </source>
</evidence>
<evidence type="ECO:0000269" key="7">
    <source>
    </source>
</evidence>
<evidence type="ECO:0000305" key="8"/>
<evidence type="ECO:0000312" key="9">
    <source>
        <dbReference type="Proteomes" id="UP000001940"/>
    </source>
</evidence>
<evidence type="ECO:0000312" key="10">
    <source>
        <dbReference type="WormBase" id="F10C5.2"/>
    </source>
</evidence>
<organism evidence="9">
    <name type="scientific">Caenorhabditis elegans</name>
    <dbReference type="NCBI Taxonomy" id="6239"/>
    <lineage>
        <taxon>Eukaryota</taxon>
        <taxon>Metazoa</taxon>
        <taxon>Ecdysozoa</taxon>
        <taxon>Nematoda</taxon>
        <taxon>Chromadorea</taxon>
        <taxon>Rhabditida</taxon>
        <taxon>Rhabditina</taxon>
        <taxon>Rhabditomorpha</taxon>
        <taxon>Rhabditoidea</taxon>
        <taxon>Rhabditidae</taxon>
        <taxon>Peloderinae</taxon>
        <taxon>Caenorhabditis</taxon>
    </lineage>
</organism>
<comment type="function">
    <text evidence="2 7">Contributes to nuclear envelope stiffness in germ cells (By similarity). Required for fertility (PubMed:32923640).</text>
</comment>
<comment type="subcellular location">
    <subcellularLocation>
        <location evidence="3">Nucleus inner membrane</location>
        <topology evidence="4">Multi-pass membrane protein</topology>
        <orientation evidence="1">Nucleoplasmic side</orientation>
    </subcellularLocation>
</comment>
<comment type="similarity">
    <text evidence="8">Belongs to the NEMP family.</text>
</comment>
<sequence length="559" mass="64240">MRLLTLALLVAGSLAYKFEDCEQKPAALNQVLRVGAKLYSYNLDFFYQKALPYNAIYAFTDVFLQTNLTNADQYQFYQGTNCTTVQQLYDNDNRYFGILRKAALLRSHQLNPFNDTIVGVSTTEPYEISVLIWKVNYFRVGVYVGAIVLFLLASKLVRNVVFYYTSGCSFGLLASLLLVAFIVWRVAPKKTIGVPILIGGWSVSLYMLHFAWSNLQSIMIEYQKYVIGYFATVLLISMAVCYKRGPPTDARSHDIAQWTLQLVALALIYFSVQMVEVSTGTIGALIIQQICRGFLFAGIRWYFVGLKAVWRKFFPARRRLLNEEEYEEQAEKTTKEQLAQLREYCKKEGNRPWKIAGNVRSARRLARFIEGEDDHITEDEIYAHELTGDVLDDEDYDFNEDYGLRTPNESHFDLEDDEDGAEEWDEVVVRRRASEYGRDSVQSVRVPRSVSSRLLSPYQGQNHMNRSLGPGIGFRRDSTPRHGNFQSEHRPRMPRTEQIYRSRRVEYDVKNGRVEGPSSSTASGMTPSEYMRKARRIDATSKTPTRKSRHPTESEDADE</sequence>
<accession>Q19293</accession>
<proteinExistence type="inferred from homology"/>
<feature type="signal peptide" evidence="4">
    <location>
        <begin position="1"/>
        <end position="15"/>
    </location>
</feature>
<feature type="chain" id="PRO_5012067930" description="Nuclear envelope integral membrane protein" evidence="4">
    <location>
        <begin position="16"/>
        <end position="559"/>
    </location>
</feature>
<feature type="transmembrane region" description="Helical" evidence="4">
    <location>
        <begin position="164"/>
        <end position="184"/>
    </location>
</feature>
<feature type="transmembrane region" description="Helical" evidence="4">
    <location>
        <begin position="192"/>
        <end position="212"/>
    </location>
</feature>
<feature type="transmembrane region" description="Helical" evidence="4">
    <location>
        <begin position="218"/>
        <end position="238"/>
    </location>
</feature>
<feature type="transmembrane region" description="Helical" evidence="4">
    <location>
        <begin position="267"/>
        <end position="287"/>
    </location>
</feature>
<feature type="transmembrane region" description="Helical" evidence="4">
    <location>
        <begin position="290"/>
        <end position="310"/>
    </location>
</feature>
<feature type="region of interest" description="Disordered" evidence="6">
    <location>
        <begin position="475"/>
        <end position="494"/>
    </location>
</feature>
<feature type="region of interest" description="Disordered" evidence="6">
    <location>
        <begin position="510"/>
        <end position="559"/>
    </location>
</feature>
<feature type="compositionally biased region" description="Polar residues" evidence="6">
    <location>
        <begin position="517"/>
        <end position="526"/>
    </location>
</feature>
<feature type="compositionally biased region" description="Basic and acidic residues" evidence="6">
    <location>
        <begin position="530"/>
        <end position="539"/>
    </location>
</feature>
<feature type="glycosylation site" description="N-linked (GlcNAc...) asparagine" evidence="5">
    <location>
        <position position="67"/>
    </location>
</feature>
<feature type="glycosylation site" description="N-linked (GlcNAc...) asparagine" evidence="5">
    <location>
        <position position="81"/>
    </location>
</feature>
<feature type="glycosylation site" description="N-linked (GlcNAc...) asparagine" evidence="5">
    <location>
        <position position="114"/>
    </location>
</feature>
<feature type="glycosylation site" description="N-linked (GlcNAc...) asparagine" evidence="5">
    <location>
        <position position="408"/>
    </location>
</feature>
<feature type="glycosylation site" description="N-linked (GlcNAc...) asparagine" evidence="5">
    <location>
        <position position="465"/>
    </location>
</feature>
<dbReference type="EMBL" id="BX284603">
    <property type="protein sequence ID" value="CCD69152.1"/>
    <property type="molecule type" value="Genomic_DNA"/>
</dbReference>
<dbReference type="RefSeq" id="NP_497202.2">
    <property type="nucleotide sequence ID" value="NM_064801.9"/>
</dbReference>
<dbReference type="DIP" id="DIP-26459N"/>
<dbReference type="FunCoup" id="Q19293">
    <property type="interactions" value="1488"/>
</dbReference>
<dbReference type="IntAct" id="Q19293">
    <property type="interactions" value="1"/>
</dbReference>
<dbReference type="STRING" id="6239.F10C5.2.2"/>
<dbReference type="PaxDb" id="6239-F10C5.2.2"/>
<dbReference type="PeptideAtlas" id="Q19293"/>
<dbReference type="EnsemblMetazoa" id="F10C5.2.1">
    <property type="protein sequence ID" value="F10C5.2.1"/>
    <property type="gene ID" value="WBGene00017328"/>
</dbReference>
<dbReference type="GeneID" id="175204"/>
<dbReference type="KEGG" id="cel:CELE_F10C5.2"/>
<dbReference type="UCSC" id="F10C5.2.1">
    <property type="organism name" value="c. elegans"/>
</dbReference>
<dbReference type="AGR" id="WB:WBGene00017328"/>
<dbReference type="CTD" id="175204"/>
<dbReference type="WormBase" id="F10C5.2">
    <property type="protein sequence ID" value="CE37715"/>
    <property type="gene ID" value="WBGene00017328"/>
    <property type="gene designation" value="nemp-1"/>
</dbReference>
<dbReference type="eggNOG" id="KOG3817">
    <property type="taxonomic scope" value="Eukaryota"/>
</dbReference>
<dbReference type="GeneTree" id="ENSGT00390000002174"/>
<dbReference type="HOGENOM" id="CLU_487660_0_0_1"/>
<dbReference type="InParanoid" id="Q19293"/>
<dbReference type="OMA" id="FLFPQCQ"/>
<dbReference type="OrthoDB" id="509138at2759"/>
<dbReference type="PhylomeDB" id="Q19293"/>
<dbReference type="PRO" id="PR:Q19293"/>
<dbReference type="Proteomes" id="UP000001940">
    <property type="component" value="Chromosome III"/>
</dbReference>
<dbReference type="Bgee" id="WBGene00017328">
    <property type="expression patterns" value="Expressed in adult organism and 4 other cell types or tissues"/>
</dbReference>
<dbReference type="GO" id="GO:0005635">
    <property type="term" value="C:nuclear envelope"/>
    <property type="evidence" value="ECO:0000318"/>
    <property type="project" value="GO_Central"/>
</dbReference>
<dbReference type="GO" id="GO:0005637">
    <property type="term" value="C:nuclear inner membrane"/>
    <property type="evidence" value="ECO:0007669"/>
    <property type="project" value="UniProtKB-SubCell"/>
</dbReference>
<dbReference type="InterPro" id="IPR019358">
    <property type="entry name" value="NEMP_fam"/>
</dbReference>
<dbReference type="PANTHER" id="PTHR13598">
    <property type="entry name" value="AT07567P-RELATED"/>
    <property type="match status" value="1"/>
</dbReference>
<dbReference type="PANTHER" id="PTHR13598:SF1">
    <property type="entry name" value="AT07567P-RELATED"/>
    <property type="match status" value="1"/>
</dbReference>
<dbReference type="Pfam" id="PF10225">
    <property type="entry name" value="NEMP"/>
    <property type="match status" value="1"/>
</dbReference>
<name>NEMP_CAEEL</name>
<gene>
    <name evidence="10" type="primary">nemp-1</name>
    <name evidence="10" type="ORF">F10C5.2</name>
</gene>